<accession>B5F6V4</accession>
<comment type="similarity">
    <text evidence="1">Belongs to the bacterial ribosomal protein bL27 family.</text>
</comment>
<organism>
    <name type="scientific">Salmonella agona (strain SL483)</name>
    <dbReference type="NCBI Taxonomy" id="454166"/>
    <lineage>
        <taxon>Bacteria</taxon>
        <taxon>Pseudomonadati</taxon>
        <taxon>Pseudomonadota</taxon>
        <taxon>Gammaproteobacteria</taxon>
        <taxon>Enterobacterales</taxon>
        <taxon>Enterobacteriaceae</taxon>
        <taxon>Salmonella</taxon>
    </lineage>
</organism>
<evidence type="ECO:0000255" key="1">
    <source>
        <dbReference type="HAMAP-Rule" id="MF_00539"/>
    </source>
</evidence>
<evidence type="ECO:0000256" key="2">
    <source>
        <dbReference type="SAM" id="MobiDB-lite"/>
    </source>
</evidence>
<evidence type="ECO:0000305" key="3"/>
<protein>
    <recommendedName>
        <fullName evidence="1">Large ribosomal subunit protein bL27</fullName>
    </recommendedName>
    <alternativeName>
        <fullName evidence="3">50S ribosomal protein L27</fullName>
    </alternativeName>
</protein>
<proteinExistence type="inferred from homology"/>
<dbReference type="EMBL" id="CP001138">
    <property type="protein sequence ID" value="ACH51986.1"/>
    <property type="molecule type" value="Genomic_DNA"/>
</dbReference>
<dbReference type="RefSeq" id="WP_000940593.1">
    <property type="nucleotide sequence ID" value="NC_011149.1"/>
</dbReference>
<dbReference type="SMR" id="B5F6V4"/>
<dbReference type="GeneID" id="66757642"/>
<dbReference type="KEGG" id="sea:SeAg_B3493"/>
<dbReference type="HOGENOM" id="CLU_095424_4_1_6"/>
<dbReference type="Proteomes" id="UP000008819">
    <property type="component" value="Chromosome"/>
</dbReference>
<dbReference type="GO" id="GO:0022625">
    <property type="term" value="C:cytosolic large ribosomal subunit"/>
    <property type="evidence" value="ECO:0007669"/>
    <property type="project" value="TreeGrafter"/>
</dbReference>
<dbReference type="GO" id="GO:0003735">
    <property type="term" value="F:structural constituent of ribosome"/>
    <property type="evidence" value="ECO:0007669"/>
    <property type="project" value="InterPro"/>
</dbReference>
<dbReference type="GO" id="GO:0006412">
    <property type="term" value="P:translation"/>
    <property type="evidence" value="ECO:0007669"/>
    <property type="project" value="UniProtKB-UniRule"/>
</dbReference>
<dbReference type="FunFam" id="2.40.50.100:FF:000001">
    <property type="entry name" value="50S ribosomal protein L27"/>
    <property type="match status" value="1"/>
</dbReference>
<dbReference type="Gene3D" id="2.40.50.100">
    <property type="match status" value="1"/>
</dbReference>
<dbReference type="HAMAP" id="MF_00539">
    <property type="entry name" value="Ribosomal_bL27"/>
    <property type="match status" value="1"/>
</dbReference>
<dbReference type="InterPro" id="IPR001684">
    <property type="entry name" value="Ribosomal_bL27"/>
</dbReference>
<dbReference type="InterPro" id="IPR018261">
    <property type="entry name" value="Ribosomal_bL27_CS"/>
</dbReference>
<dbReference type="NCBIfam" id="TIGR00062">
    <property type="entry name" value="L27"/>
    <property type="match status" value="1"/>
</dbReference>
<dbReference type="PANTHER" id="PTHR15893:SF0">
    <property type="entry name" value="LARGE RIBOSOMAL SUBUNIT PROTEIN BL27M"/>
    <property type="match status" value="1"/>
</dbReference>
<dbReference type="PANTHER" id="PTHR15893">
    <property type="entry name" value="RIBOSOMAL PROTEIN L27"/>
    <property type="match status" value="1"/>
</dbReference>
<dbReference type="Pfam" id="PF01016">
    <property type="entry name" value="Ribosomal_L27"/>
    <property type="match status" value="1"/>
</dbReference>
<dbReference type="PRINTS" id="PR00063">
    <property type="entry name" value="RIBOSOMALL27"/>
</dbReference>
<dbReference type="SUPFAM" id="SSF110324">
    <property type="entry name" value="Ribosomal L27 protein-like"/>
    <property type="match status" value="1"/>
</dbReference>
<dbReference type="PROSITE" id="PS00831">
    <property type="entry name" value="RIBOSOMAL_L27"/>
    <property type="match status" value="1"/>
</dbReference>
<gene>
    <name evidence="1" type="primary">rpmA</name>
    <name type="ordered locus">SeAg_B3493</name>
</gene>
<sequence length="85" mass="9125">MAHKKAGGSTRNGRDSEAKRLGVKRFGGEAVLAGSIIVRQRGTKFHAGTNVGCGRDHTLFAKADGKVKFEVKGPKNRKYISIVAE</sequence>
<keyword id="KW-0687">Ribonucleoprotein</keyword>
<keyword id="KW-0689">Ribosomal protein</keyword>
<feature type="chain" id="PRO_1000128800" description="Large ribosomal subunit protein bL27">
    <location>
        <begin position="1"/>
        <end position="85"/>
    </location>
</feature>
<feature type="region of interest" description="Disordered" evidence="2">
    <location>
        <begin position="1"/>
        <end position="20"/>
    </location>
</feature>
<reference key="1">
    <citation type="journal article" date="2011" name="J. Bacteriol.">
        <title>Comparative genomics of 28 Salmonella enterica isolates: evidence for CRISPR-mediated adaptive sublineage evolution.</title>
        <authorList>
            <person name="Fricke W.F."/>
            <person name="Mammel M.K."/>
            <person name="McDermott P.F."/>
            <person name="Tartera C."/>
            <person name="White D.G."/>
            <person name="Leclerc J.E."/>
            <person name="Ravel J."/>
            <person name="Cebula T.A."/>
        </authorList>
    </citation>
    <scope>NUCLEOTIDE SEQUENCE [LARGE SCALE GENOMIC DNA]</scope>
    <source>
        <strain>SL483</strain>
    </source>
</reference>
<name>RL27_SALA4</name>